<dbReference type="EMBL" id="AL078637">
    <property type="protein sequence ID" value="CAB45058.1"/>
    <property type="molecule type" value="Genomic_DNA"/>
</dbReference>
<dbReference type="EMBL" id="AL161561">
    <property type="protein sequence ID" value="CAB79333.1"/>
    <property type="molecule type" value="Genomic_DNA"/>
</dbReference>
<dbReference type="EMBL" id="CP002687">
    <property type="protein sequence ID" value="AEE84870.1"/>
    <property type="molecule type" value="Genomic_DNA"/>
</dbReference>
<dbReference type="EMBL" id="CP002687">
    <property type="protein sequence ID" value="AEE84871.1"/>
    <property type="molecule type" value="Genomic_DNA"/>
</dbReference>
<dbReference type="EMBL" id="CP002687">
    <property type="protein sequence ID" value="AEE84872.1"/>
    <property type="molecule type" value="Genomic_DNA"/>
</dbReference>
<dbReference type="EMBL" id="CP002687">
    <property type="protein sequence ID" value="AEE84873.1"/>
    <property type="molecule type" value="Genomic_DNA"/>
</dbReference>
<dbReference type="EMBL" id="CP002687">
    <property type="protein sequence ID" value="AEE84874.1"/>
    <property type="molecule type" value="Genomic_DNA"/>
</dbReference>
<dbReference type="EMBL" id="AK317000">
    <property type="protein sequence ID" value="BAH19695.1"/>
    <property type="molecule type" value="mRNA"/>
</dbReference>
<dbReference type="EMBL" id="BT011571">
    <property type="protein sequence ID" value="AAS21130.1"/>
    <property type="molecule type" value="mRNA"/>
</dbReference>
<dbReference type="EMBL" id="BT012264">
    <property type="protein sequence ID" value="AAS76751.1"/>
    <property type="molecule type" value="mRNA"/>
</dbReference>
<dbReference type="EMBL" id="AK227063">
    <property type="protein sequence ID" value="BAE99122.1"/>
    <property type="molecule type" value="mRNA"/>
</dbReference>
<dbReference type="PIR" id="T09886">
    <property type="entry name" value="T09886"/>
</dbReference>
<dbReference type="RefSeq" id="NP_001078439.1">
    <molecule id="Q9STX1-1"/>
    <property type="nucleotide sequence ID" value="NM_001084970.1"/>
</dbReference>
<dbReference type="RefSeq" id="NP_001078440.1">
    <molecule id="Q9STX1-1"/>
    <property type="nucleotide sequence ID" value="NM_001084971.1"/>
</dbReference>
<dbReference type="RefSeq" id="NP_001078441.1">
    <molecule id="Q9STX1-1"/>
    <property type="nucleotide sequence ID" value="NM_001084972.2"/>
</dbReference>
<dbReference type="RefSeq" id="NP_194154.1">
    <molecule id="Q9STX1-1"/>
    <property type="nucleotide sequence ID" value="NM_118556.4"/>
</dbReference>
<dbReference type="RefSeq" id="NP_849432.1">
    <molecule id="Q9STX1-2"/>
    <property type="nucleotide sequence ID" value="NM_179101.3"/>
</dbReference>
<dbReference type="SMR" id="Q9STX1"/>
<dbReference type="FunCoup" id="Q9STX1">
    <property type="interactions" value="122"/>
</dbReference>
<dbReference type="STRING" id="3702.Q9STX1"/>
<dbReference type="iPTMnet" id="Q9STX1"/>
<dbReference type="PaxDb" id="3702-AT4G24230.6"/>
<dbReference type="ProteomicsDB" id="244392">
    <molecule id="Q9STX1-1"/>
</dbReference>
<dbReference type="EnsemblPlants" id="AT4G24230.1">
    <molecule id="Q9STX1-2"/>
    <property type="protein sequence ID" value="AT4G24230.1"/>
    <property type="gene ID" value="AT4G24230"/>
</dbReference>
<dbReference type="EnsemblPlants" id="AT4G24230.2">
    <molecule id="Q9STX1-1"/>
    <property type="protein sequence ID" value="AT4G24230.2"/>
    <property type="gene ID" value="AT4G24230"/>
</dbReference>
<dbReference type="EnsemblPlants" id="AT4G24230.3">
    <molecule id="Q9STX1-1"/>
    <property type="protein sequence ID" value="AT4G24230.3"/>
    <property type="gene ID" value="AT4G24230"/>
</dbReference>
<dbReference type="EnsemblPlants" id="AT4G24230.4">
    <molecule id="Q9STX1-1"/>
    <property type="protein sequence ID" value="AT4G24230.4"/>
    <property type="gene ID" value="AT4G24230"/>
</dbReference>
<dbReference type="EnsemblPlants" id="AT4G24230.5">
    <molecule id="Q9STX1-1"/>
    <property type="protein sequence ID" value="AT4G24230.5"/>
    <property type="gene ID" value="AT4G24230"/>
</dbReference>
<dbReference type="GeneID" id="828524"/>
<dbReference type="Gramene" id="AT4G24230.1">
    <molecule id="Q9STX1-2"/>
    <property type="protein sequence ID" value="AT4G24230.1"/>
    <property type="gene ID" value="AT4G24230"/>
</dbReference>
<dbReference type="Gramene" id="AT4G24230.2">
    <molecule id="Q9STX1-1"/>
    <property type="protein sequence ID" value="AT4G24230.2"/>
    <property type="gene ID" value="AT4G24230"/>
</dbReference>
<dbReference type="Gramene" id="AT4G24230.3">
    <molecule id="Q9STX1-1"/>
    <property type="protein sequence ID" value="AT4G24230.3"/>
    <property type="gene ID" value="AT4G24230"/>
</dbReference>
<dbReference type="Gramene" id="AT4G24230.4">
    <molecule id="Q9STX1-1"/>
    <property type="protein sequence ID" value="AT4G24230.4"/>
    <property type="gene ID" value="AT4G24230"/>
</dbReference>
<dbReference type="Gramene" id="AT4G24230.5">
    <molecule id="Q9STX1-1"/>
    <property type="protein sequence ID" value="AT4G24230.5"/>
    <property type="gene ID" value="AT4G24230"/>
</dbReference>
<dbReference type="KEGG" id="ath:AT4G24230"/>
<dbReference type="Araport" id="AT4G24230"/>
<dbReference type="TAIR" id="AT4G24230">
    <property type="gene designation" value="ACBP3"/>
</dbReference>
<dbReference type="eggNOG" id="KOG0817">
    <property type="taxonomic scope" value="Eukaryota"/>
</dbReference>
<dbReference type="HOGENOM" id="CLU_065459_0_0_1"/>
<dbReference type="InParanoid" id="Q9STX1"/>
<dbReference type="OMA" id="FRECENA"/>
<dbReference type="OrthoDB" id="71307at2759"/>
<dbReference type="PRO" id="PR:Q9STX1"/>
<dbReference type="Proteomes" id="UP000006548">
    <property type="component" value="Chromosome 4"/>
</dbReference>
<dbReference type="ExpressionAtlas" id="Q9STX1">
    <property type="expression patterns" value="baseline and differential"/>
</dbReference>
<dbReference type="GO" id="GO:0005615">
    <property type="term" value="C:extracellular space"/>
    <property type="evidence" value="ECO:0000314"/>
    <property type="project" value="UniProtKB"/>
</dbReference>
<dbReference type="GO" id="GO:0000062">
    <property type="term" value="F:fatty-acyl-CoA binding"/>
    <property type="evidence" value="ECO:0000314"/>
    <property type="project" value="UniProtKB"/>
</dbReference>
<dbReference type="Gene3D" id="1.20.80.10">
    <property type="match status" value="1"/>
</dbReference>
<dbReference type="InterPro" id="IPR000582">
    <property type="entry name" value="Acyl-CoA-binding_protein"/>
</dbReference>
<dbReference type="InterPro" id="IPR035984">
    <property type="entry name" value="Acyl-CoA-binding_sf"/>
</dbReference>
<dbReference type="InterPro" id="IPR014352">
    <property type="entry name" value="FERM/acyl-CoA-bd_prot_sf"/>
</dbReference>
<dbReference type="PANTHER" id="PTHR23310:SF122">
    <property type="entry name" value="ACYL-COA-BINDING DOMAIN-CONTAINING PROTEIN 3"/>
    <property type="match status" value="1"/>
</dbReference>
<dbReference type="PANTHER" id="PTHR23310">
    <property type="entry name" value="ACYL-COA-BINDING PROTEIN, ACBP"/>
    <property type="match status" value="1"/>
</dbReference>
<dbReference type="Pfam" id="PF00887">
    <property type="entry name" value="ACBP"/>
    <property type="match status" value="1"/>
</dbReference>
<dbReference type="SUPFAM" id="SSF47027">
    <property type="entry name" value="Acyl-CoA binding protein"/>
    <property type="match status" value="1"/>
</dbReference>
<dbReference type="PROSITE" id="PS51228">
    <property type="entry name" value="ACB_2"/>
    <property type="match status" value="1"/>
</dbReference>
<keyword id="KW-0025">Alternative splicing</keyword>
<keyword id="KW-0175">Coiled coil</keyword>
<keyword id="KW-0446">Lipid-binding</keyword>
<keyword id="KW-1185">Reference proteome</keyword>
<keyword id="KW-0964">Secreted</keyword>
<keyword id="KW-0732">Signal</keyword>
<keyword id="KW-0813">Transport</keyword>
<reference key="1">
    <citation type="journal article" date="1999" name="Nature">
        <title>Sequence and analysis of chromosome 4 of the plant Arabidopsis thaliana.</title>
        <authorList>
            <person name="Mayer K.F.X."/>
            <person name="Schueller C."/>
            <person name="Wambutt R."/>
            <person name="Murphy G."/>
            <person name="Volckaert G."/>
            <person name="Pohl T."/>
            <person name="Duesterhoeft A."/>
            <person name="Stiekema W."/>
            <person name="Entian K.-D."/>
            <person name="Terryn N."/>
            <person name="Harris B."/>
            <person name="Ansorge W."/>
            <person name="Brandt P."/>
            <person name="Grivell L.A."/>
            <person name="Rieger M."/>
            <person name="Weichselgartner M."/>
            <person name="de Simone V."/>
            <person name="Obermaier B."/>
            <person name="Mache R."/>
            <person name="Mueller M."/>
            <person name="Kreis M."/>
            <person name="Delseny M."/>
            <person name="Puigdomenech P."/>
            <person name="Watson M."/>
            <person name="Schmidtheini T."/>
            <person name="Reichert B."/>
            <person name="Portetelle D."/>
            <person name="Perez-Alonso M."/>
            <person name="Boutry M."/>
            <person name="Bancroft I."/>
            <person name="Vos P."/>
            <person name="Hoheisel J."/>
            <person name="Zimmermann W."/>
            <person name="Wedler H."/>
            <person name="Ridley P."/>
            <person name="Langham S.-A."/>
            <person name="McCullagh B."/>
            <person name="Bilham L."/>
            <person name="Robben J."/>
            <person name="van der Schueren J."/>
            <person name="Grymonprez B."/>
            <person name="Chuang Y.-J."/>
            <person name="Vandenbussche F."/>
            <person name="Braeken M."/>
            <person name="Weltjens I."/>
            <person name="Voet M."/>
            <person name="Bastiaens I."/>
            <person name="Aert R."/>
            <person name="Defoor E."/>
            <person name="Weitzenegger T."/>
            <person name="Bothe G."/>
            <person name="Ramsperger U."/>
            <person name="Hilbert H."/>
            <person name="Braun M."/>
            <person name="Holzer E."/>
            <person name="Brandt A."/>
            <person name="Peters S."/>
            <person name="van Staveren M."/>
            <person name="Dirkse W."/>
            <person name="Mooijman P."/>
            <person name="Klein Lankhorst R."/>
            <person name="Rose M."/>
            <person name="Hauf J."/>
            <person name="Koetter P."/>
            <person name="Berneiser S."/>
            <person name="Hempel S."/>
            <person name="Feldpausch M."/>
            <person name="Lamberth S."/>
            <person name="Van den Daele H."/>
            <person name="De Keyser A."/>
            <person name="Buysshaert C."/>
            <person name="Gielen J."/>
            <person name="Villarroel R."/>
            <person name="De Clercq R."/>
            <person name="van Montagu M."/>
            <person name="Rogers J."/>
            <person name="Cronin A."/>
            <person name="Quail M.A."/>
            <person name="Bray-Allen S."/>
            <person name="Clark L."/>
            <person name="Doggett J."/>
            <person name="Hall S."/>
            <person name="Kay M."/>
            <person name="Lennard N."/>
            <person name="McLay K."/>
            <person name="Mayes R."/>
            <person name="Pettett A."/>
            <person name="Rajandream M.A."/>
            <person name="Lyne M."/>
            <person name="Benes V."/>
            <person name="Rechmann S."/>
            <person name="Borkova D."/>
            <person name="Bloecker H."/>
            <person name="Scharfe M."/>
            <person name="Grimm M."/>
            <person name="Loehnert T.-H."/>
            <person name="Dose S."/>
            <person name="de Haan M."/>
            <person name="Maarse A.C."/>
            <person name="Schaefer M."/>
            <person name="Mueller-Auer S."/>
            <person name="Gabel C."/>
            <person name="Fuchs M."/>
            <person name="Fartmann B."/>
            <person name="Granderath K."/>
            <person name="Dauner D."/>
            <person name="Herzl A."/>
            <person name="Neumann S."/>
            <person name="Argiriou A."/>
            <person name="Vitale D."/>
            <person name="Liguori R."/>
            <person name="Piravandi E."/>
            <person name="Massenet O."/>
            <person name="Quigley F."/>
            <person name="Clabauld G."/>
            <person name="Muendlein A."/>
            <person name="Felber R."/>
            <person name="Schnabl S."/>
            <person name="Hiller R."/>
            <person name="Schmidt W."/>
            <person name="Lecharny A."/>
            <person name="Aubourg S."/>
            <person name="Chefdor F."/>
            <person name="Cooke R."/>
            <person name="Berger C."/>
            <person name="Monfort A."/>
            <person name="Casacuberta E."/>
            <person name="Gibbons T."/>
            <person name="Weber N."/>
            <person name="Vandenbol M."/>
            <person name="Bargues M."/>
            <person name="Terol J."/>
            <person name="Torres A."/>
            <person name="Perez-Perez A."/>
            <person name="Purnelle B."/>
            <person name="Bent E."/>
            <person name="Johnson S."/>
            <person name="Tacon D."/>
            <person name="Jesse T."/>
            <person name="Heijnen L."/>
            <person name="Schwarz S."/>
            <person name="Scholler P."/>
            <person name="Heber S."/>
            <person name="Francs P."/>
            <person name="Bielke C."/>
            <person name="Frishman D."/>
            <person name="Haase D."/>
            <person name="Lemcke K."/>
            <person name="Mewes H.-W."/>
            <person name="Stocker S."/>
            <person name="Zaccaria P."/>
            <person name="Bevan M."/>
            <person name="Wilson R.K."/>
            <person name="de la Bastide M."/>
            <person name="Habermann K."/>
            <person name="Parnell L."/>
            <person name="Dedhia N."/>
            <person name="Gnoj L."/>
            <person name="Schutz K."/>
            <person name="Huang E."/>
            <person name="Spiegel L."/>
            <person name="Sekhon M."/>
            <person name="Murray J."/>
            <person name="Sheet P."/>
            <person name="Cordes M."/>
            <person name="Abu-Threideh J."/>
            <person name="Stoneking T."/>
            <person name="Kalicki J."/>
            <person name="Graves T."/>
            <person name="Harmon G."/>
            <person name="Edwards J."/>
            <person name="Latreille P."/>
            <person name="Courtney L."/>
            <person name="Cloud J."/>
            <person name="Abbott A."/>
            <person name="Scott K."/>
            <person name="Johnson D."/>
            <person name="Minx P."/>
            <person name="Bentley D."/>
            <person name="Fulton B."/>
            <person name="Miller N."/>
            <person name="Greco T."/>
            <person name="Kemp K."/>
            <person name="Kramer J."/>
            <person name="Fulton L."/>
            <person name="Mardis E."/>
            <person name="Dante M."/>
            <person name="Pepin K."/>
            <person name="Hillier L.W."/>
            <person name="Nelson J."/>
            <person name="Spieth J."/>
            <person name="Ryan E."/>
            <person name="Andrews S."/>
            <person name="Geisel C."/>
            <person name="Layman D."/>
            <person name="Du H."/>
            <person name="Ali J."/>
            <person name="Berghoff A."/>
            <person name="Jones K."/>
            <person name="Drone K."/>
            <person name="Cotton M."/>
            <person name="Joshu C."/>
            <person name="Antonoiu B."/>
            <person name="Zidanic M."/>
            <person name="Strong C."/>
            <person name="Sun H."/>
            <person name="Lamar B."/>
            <person name="Yordan C."/>
            <person name="Ma P."/>
            <person name="Zhong J."/>
            <person name="Preston R."/>
            <person name="Vil D."/>
            <person name="Shekher M."/>
            <person name="Matero A."/>
            <person name="Shah R."/>
            <person name="Swaby I.K."/>
            <person name="O'Shaughnessy A."/>
            <person name="Rodriguez M."/>
            <person name="Hoffman J."/>
            <person name="Till S."/>
            <person name="Granat S."/>
            <person name="Shohdy N."/>
            <person name="Hasegawa A."/>
            <person name="Hameed A."/>
            <person name="Lodhi M."/>
            <person name="Johnson A."/>
            <person name="Chen E."/>
            <person name="Marra M.A."/>
            <person name="Martienssen R."/>
            <person name="McCombie W.R."/>
        </authorList>
    </citation>
    <scope>NUCLEOTIDE SEQUENCE [LARGE SCALE GENOMIC DNA]</scope>
    <source>
        <strain>cv. Columbia</strain>
    </source>
</reference>
<reference key="2">
    <citation type="journal article" date="2017" name="Plant J.">
        <title>Araport11: a complete reannotation of the Arabidopsis thaliana reference genome.</title>
        <authorList>
            <person name="Cheng C.Y."/>
            <person name="Krishnakumar V."/>
            <person name="Chan A.P."/>
            <person name="Thibaud-Nissen F."/>
            <person name="Schobel S."/>
            <person name="Town C.D."/>
        </authorList>
    </citation>
    <scope>GENOME REANNOTATION</scope>
    <source>
        <strain>cv. Columbia</strain>
    </source>
</reference>
<reference key="3">
    <citation type="journal article" date="2009" name="DNA Res.">
        <title>Analysis of multiple occurrences of alternative splicing events in Arabidopsis thaliana using novel sequenced full-length cDNAs.</title>
        <authorList>
            <person name="Iida K."/>
            <person name="Fukami-Kobayashi K."/>
            <person name="Toyoda A."/>
            <person name="Sakaki Y."/>
            <person name="Kobayashi M."/>
            <person name="Seki M."/>
            <person name="Shinozaki K."/>
        </authorList>
    </citation>
    <scope>NUCLEOTIDE SEQUENCE [LARGE SCALE MRNA] (ISOFORM 2)</scope>
    <source>
        <strain>cv. Columbia</strain>
    </source>
</reference>
<reference key="4">
    <citation type="submission" date="2004-03" db="EMBL/GenBank/DDBJ databases">
        <title>Arabidopsis ORF clones.</title>
        <authorList>
            <person name="Cheuk R.F."/>
            <person name="Chen H."/>
            <person name="Kim C.J."/>
            <person name="Shinn P."/>
            <person name="Ecker J.R."/>
        </authorList>
    </citation>
    <scope>NUCLEOTIDE SEQUENCE [LARGE SCALE MRNA] (ISOFORM 1)</scope>
    <source>
        <strain>cv. Columbia</strain>
    </source>
</reference>
<reference key="5">
    <citation type="submission" date="2006-07" db="EMBL/GenBank/DDBJ databases">
        <title>Large-scale analysis of RIKEN Arabidopsis full-length (RAFL) cDNAs.</title>
        <authorList>
            <person name="Totoki Y."/>
            <person name="Seki M."/>
            <person name="Ishida J."/>
            <person name="Nakajima M."/>
            <person name="Enju A."/>
            <person name="Kamiya A."/>
            <person name="Narusaka M."/>
            <person name="Shin-i T."/>
            <person name="Nakagawa M."/>
            <person name="Sakamoto N."/>
            <person name="Oishi K."/>
            <person name="Kohara Y."/>
            <person name="Kobayashi M."/>
            <person name="Toyoda A."/>
            <person name="Sakaki Y."/>
            <person name="Sakurai T."/>
            <person name="Iida K."/>
            <person name="Akiyama K."/>
            <person name="Satou M."/>
            <person name="Toyoda T."/>
            <person name="Konagaya A."/>
            <person name="Carninci P."/>
            <person name="Kawai J."/>
            <person name="Hayashizaki Y."/>
            <person name="Shinozaki K."/>
        </authorList>
    </citation>
    <scope>NUCLEOTIDE SEQUENCE [LARGE SCALE MRNA] (ISOFORM 1)</scope>
    <source>
        <strain>cv. Columbia</strain>
    </source>
</reference>
<reference key="6">
    <citation type="journal article" date="2004" name="Plant Mol. Biol.">
        <title>ACBP4 and ACBP5, novel Arabidopsis acyl-CoA-binding proteins with kelch motifs that bind oleoyl-CoA.</title>
        <authorList>
            <person name="Leung K.-C."/>
            <person name="Li H.-Y."/>
            <person name="Mishra G."/>
            <person name="Chye M.-L."/>
        </authorList>
    </citation>
    <scope>TISSUE SPECIFICITY</scope>
</reference>
<reference key="7">
    <citation type="journal article" date="2006" name="Planta">
        <title>Arabidopsis ACBP3 is an extracellularly targeted acyl-CoA-binding protein.</title>
        <authorList>
            <person name="Leung K.-C."/>
            <person name="Li H.-Y."/>
            <person name="Xiao S."/>
            <person name="Tse M.-H."/>
            <person name="Chye M.-L."/>
        </authorList>
    </citation>
    <scope>FUNCTION</scope>
    <scope>MUTAGENESIS OF PHE-260; LYS-264; ARG-284; LYS-286 AND TYR-305</scope>
    <scope>SUBCELLULAR LOCATION</scope>
</reference>
<reference key="8">
    <citation type="journal article" date="2009" name="Plant Physiol. Biochem.">
        <title>An Arabidopsis family of six acyl-CoA-binding proteins has three cytosolic members.</title>
        <authorList>
            <person name="Xiao S."/>
            <person name="Chye M.-L."/>
        </authorList>
    </citation>
    <scope>GENE FAMILY</scope>
    <scope>NOMENCLATURE</scope>
</reference>
<organism>
    <name type="scientific">Arabidopsis thaliana</name>
    <name type="common">Mouse-ear cress</name>
    <dbReference type="NCBI Taxonomy" id="3702"/>
    <lineage>
        <taxon>Eukaryota</taxon>
        <taxon>Viridiplantae</taxon>
        <taxon>Streptophyta</taxon>
        <taxon>Embryophyta</taxon>
        <taxon>Tracheophyta</taxon>
        <taxon>Spermatophyta</taxon>
        <taxon>Magnoliopsida</taxon>
        <taxon>eudicotyledons</taxon>
        <taxon>Gunneridae</taxon>
        <taxon>Pentapetalae</taxon>
        <taxon>rosids</taxon>
        <taxon>malvids</taxon>
        <taxon>Brassicales</taxon>
        <taxon>Brassicaceae</taxon>
        <taxon>Camelineae</taxon>
        <taxon>Arabidopsis</taxon>
    </lineage>
</organism>
<protein>
    <recommendedName>
        <fullName>Acyl-CoA-binding domain-containing protein 3</fullName>
        <shortName>Acyl-CoA binding protein 3</shortName>
    </recommendedName>
</protein>
<sequence>MEVFLEMLLTAVVALLFSFLLAKLVSVATVENDLSSDQPLKPEIGVGVTEDVRFGMKMDARVLESQRNFQVVDENVELVDRFLSEEADRVYEVDEAVTGNAKICGDREAESSAAASSENYVIAEEVILVRGQDEQSDSAEAESISSVSPENVVAEEIKSQGQEEVTELGRSGCVENEESGGDVLVAESEEVRVEKSSNMVEESDAEAENEEKTELTIEEDDDWEGIERSELEKAFAAAVNLLEESGKAEEIGAEAKMELFGLHKIATEGSCREAQPMAVMISARAKWNAWQKLGNMSQEEAMEQYLALVSKEIPGLTKAGHTVGKMSEMETSVGLPPNSGSLEDPTNLVTTGVDESSKNGIP</sequence>
<name>ACBP3_ARATH</name>
<feature type="signal peptide" evidence="2">
    <location>
        <begin position="1"/>
        <end position="22"/>
    </location>
</feature>
<feature type="chain" id="PRO_0000379902" description="Acyl-CoA-binding domain-containing protein 3">
    <location>
        <begin position="23"/>
        <end position="362"/>
    </location>
</feature>
<feature type="domain" description="ACB" evidence="3">
    <location>
        <begin position="231"/>
        <end position="318"/>
    </location>
</feature>
<feature type="region of interest" description="Disordered" evidence="4">
    <location>
        <begin position="132"/>
        <end position="151"/>
    </location>
</feature>
<feature type="region of interest" description="Disordered" evidence="4">
    <location>
        <begin position="193"/>
        <end position="214"/>
    </location>
</feature>
<feature type="region of interest" description="Disordered" evidence="4">
    <location>
        <begin position="329"/>
        <end position="362"/>
    </location>
</feature>
<feature type="coiled-coil region" evidence="2">
    <location>
        <begin position="192"/>
        <end position="221"/>
    </location>
</feature>
<feature type="binding site" evidence="1">
    <location>
        <begin position="260"/>
        <end position="264"/>
    </location>
    <ligand>
        <name>an acyl-CoA</name>
        <dbReference type="ChEBI" id="CHEBI:58342"/>
    </ligand>
</feature>
<feature type="binding site" evidence="1">
    <location>
        <position position="286"/>
    </location>
    <ligand>
        <name>an acyl-CoA</name>
        <dbReference type="ChEBI" id="CHEBI:58342"/>
    </ligand>
</feature>
<feature type="binding site" evidence="1">
    <location>
        <position position="305"/>
    </location>
    <ligand>
        <name>an acyl-CoA</name>
        <dbReference type="ChEBI" id="CHEBI:58342"/>
    </ligand>
</feature>
<feature type="splice variant" id="VSP_037738" description="In isoform 2." evidence="7">
    <original>GIP</original>
    <variation>VSGER</variation>
    <location>
        <begin position="360"/>
        <end position="362"/>
    </location>
</feature>
<feature type="mutagenesis site" description="Normal arachidonyl-CoA-binding activity." evidence="6">
    <original>F</original>
    <variation>A</variation>
    <location>
        <position position="260"/>
    </location>
</feature>
<feature type="mutagenesis site" description="Normal arachidonyl-CoA-binding activity." evidence="6">
    <original>K</original>
    <variation>A</variation>
    <location>
        <position position="264"/>
    </location>
</feature>
<feature type="mutagenesis site" description="Loss of arachidonyl-CoA-binding activity." evidence="6">
    <original>R</original>
    <variation>A</variation>
    <location>
        <position position="284"/>
    </location>
</feature>
<feature type="mutagenesis site" description="Normal arachidonyl-CoA-binding activity." evidence="6">
    <original>K</original>
    <variation>A</variation>
    <location>
        <position position="286"/>
    </location>
</feature>
<feature type="mutagenesis site" description="Normal arachidonyl-CoA-binding activity." evidence="6">
    <original>Y</original>
    <variation>A</variation>
    <location>
        <position position="305"/>
    </location>
</feature>
<feature type="sequence conflict" description="In Ref. 4; AAS21130/AAS76751." evidence="8" ref="4">
    <original>M</original>
    <variation>V</variation>
    <location>
        <position position="326"/>
    </location>
</feature>
<evidence type="ECO:0000250" key="1">
    <source>
        <dbReference type="UniProtKB" id="P07107"/>
    </source>
</evidence>
<evidence type="ECO:0000255" key="2"/>
<evidence type="ECO:0000255" key="3">
    <source>
        <dbReference type="PROSITE-ProRule" id="PRU00573"/>
    </source>
</evidence>
<evidence type="ECO:0000256" key="4">
    <source>
        <dbReference type="SAM" id="MobiDB-lite"/>
    </source>
</evidence>
<evidence type="ECO:0000269" key="5">
    <source>
    </source>
</evidence>
<evidence type="ECO:0000269" key="6">
    <source>
    </source>
</evidence>
<evidence type="ECO:0000303" key="7">
    <source>
    </source>
</evidence>
<evidence type="ECO:0000305" key="8"/>
<gene>
    <name type="primary">ACBP3</name>
    <name type="ordered locus">At4g24230</name>
    <name type="ORF">T22A6.60</name>
</gene>
<accession>Q9STX1</accession>
<accession>B9DG28</accession>
<accession>Q6NLR6</accession>
<comment type="function">
    <text evidence="6">Binds medium- and long-chain acyl-CoA esters with very high affinity. Can interact in vitro with arachidonyl-CoA, barely with oleoyl-CoA, but not with palmitoyl-CoA.</text>
</comment>
<comment type="subcellular location">
    <subcellularLocation>
        <location evidence="6">Secreted</location>
        <location evidence="6">Extracellular space</location>
    </subcellularLocation>
</comment>
<comment type="alternative products">
    <event type="alternative splicing"/>
    <isoform>
        <id>Q9STX1-1</id>
        <name>1</name>
        <sequence type="displayed"/>
    </isoform>
    <isoform>
        <id>Q9STX1-2</id>
        <name>2</name>
        <sequence type="described" ref="VSP_037738"/>
    </isoform>
</comment>
<comment type="tissue specificity">
    <text evidence="5">Expressed in roots, stems, leaves, flowers and siliques.</text>
</comment>
<comment type="similarity">
    <text evidence="8">Belongs to the ACBP family.</text>
</comment>
<proteinExistence type="evidence at protein level"/>